<keyword id="KW-0963">Cytoplasm</keyword>
<keyword id="KW-0342">GTP-binding</keyword>
<keyword id="KW-0378">Hydrolase</keyword>
<keyword id="KW-0460">Magnesium</keyword>
<keyword id="KW-0479">Metal-binding</keyword>
<keyword id="KW-0547">Nucleotide-binding</keyword>
<name>OBG_STRSY</name>
<evidence type="ECO:0000255" key="1">
    <source>
        <dbReference type="HAMAP-Rule" id="MF_01454"/>
    </source>
</evidence>
<evidence type="ECO:0000255" key="2">
    <source>
        <dbReference type="PROSITE-ProRule" id="PRU01229"/>
    </source>
</evidence>
<evidence type="ECO:0000255" key="3">
    <source>
        <dbReference type="PROSITE-ProRule" id="PRU01231"/>
    </source>
</evidence>
<accession>A4VUC8</accession>
<gene>
    <name evidence="1" type="primary">obg</name>
    <name type="ordered locus">SSU05_0751</name>
</gene>
<protein>
    <recommendedName>
        <fullName evidence="1">GTPase Obg</fullName>
        <ecNumber evidence="1">3.6.5.-</ecNumber>
    </recommendedName>
    <alternativeName>
        <fullName evidence="1">GTP-binding protein Obg</fullName>
    </alternativeName>
</protein>
<organism>
    <name type="scientific">Streptococcus suis (strain 05ZYH33)</name>
    <dbReference type="NCBI Taxonomy" id="391295"/>
    <lineage>
        <taxon>Bacteria</taxon>
        <taxon>Bacillati</taxon>
        <taxon>Bacillota</taxon>
        <taxon>Bacilli</taxon>
        <taxon>Lactobacillales</taxon>
        <taxon>Streptococcaceae</taxon>
        <taxon>Streptococcus</taxon>
    </lineage>
</organism>
<reference key="1">
    <citation type="journal article" date="2007" name="PLoS ONE">
        <title>A glimpse of streptococcal toxic shock syndrome from comparative genomics of S. suis 2 Chinese isolates.</title>
        <authorList>
            <person name="Chen C."/>
            <person name="Tang J."/>
            <person name="Dong W."/>
            <person name="Wang C."/>
            <person name="Feng Y."/>
            <person name="Wang J."/>
            <person name="Zheng F."/>
            <person name="Pan X."/>
            <person name="Liu D."/>
            <person name="Li M."/>
            <person name="Song Y."/>
            <person name="Zhu X."/>
            <person name="Sun H."/>
            <person name="Feng T."/>
            <person name="Guo Z."/>
            <person name="Ju A."/>
            <person name="Ge J."/>
            <person name="Dong Y."/>
            <person name="Sun W."/>
            <person name="Jiang Y."/>
            <person name="Wang J."/>
            <person name="Yan J."/>
            <person name="Yang H."/>
            <person name="Wang X."/>
            <person name="Gao G.F."/>
            <person name="Yang R."/>
            <person name="Wang J."/>
            <person name="Yu J."/>
        </authorList>
    </citation>
    <scope>NUCLEOTIDE SEQUENCE [LARGE SCALE GENOMIC DNA]</scope>
    <source>
        <strain>05ZYH33</strain>
    </source>
</reference>
<comment type="function">
    <text evidence="1">An essential GTPase which binds GTP, GDP and possibly (p)ppGpp with moderate affinity, with high nucleotide exchange rates and a fairly low GTP hydrolysis rate. Plays a role in control of the cell cycle, stress response, ribosome biogenesis and in those bacteria that undergo differentiation, in morphogenesis control.</text>
</comment>
<comment type="cofactor">
    <cofactor evidence="1">
        <name>Mg(2+)</name>
        <dbReference type="ChEBI" id="CHEBI:18420"/>
    </cofactor>
</comment>
<comment type="subunit">
    <text evidence="1">Monomer.</text>
</comment>
<comment type="subcellular location">
    <subcellularLocation>
        <location evidence="1">Cytoplasm</location>
    </subcellularLocation>
</comment>
<comment type="similarity">
    <text evidence="1">Belongs to the TRAFAC class OBG-HflX-like GTPase superfamily. OBG GTPase family.</text>
</comment>
<proteinExistence type="inferred from homology"/>
<sequence>MSMFLDTAKIKVKAGKGGDGMVAFRREKYVPNGGPWGGDGGHGGNVVFVVDEGLRTLMDFRYHRRFKADDGEKGMTKGMHGRGAEDLIVRVPQGTTVRDADTGKIITDLVENGQEFVIAHGGRGGRGNIRFATPKNPAPEISENGEPGEERNLELELKVLADVGLVGFPSVGKSTLLSVITAAKPKIGAYHFTTIVPNLGMVRTKSGESFAVADLPGLIEGASQGVGLGTQFLRHIERTRVILHVLDMSASEGRDPYEDYVAINNELETYNLRLMERPQIIVANKMDMPEAEEHLEEFKKKLATNYDEFEELPQIFPISGIAHQGLENLLEATAELLEKTPEFLLYDESDFQEEEAYYGFNPDEPEFAISRADDASWILSGDKLEKLFTMTNFDRDESVMKFARQLRGMGVDEALRARGAKDGDIVRIGKFEFEFVD</sequence>
<feature type="chain" id="PRO_0000386316" description="GTPase Obg">
    <location>
        <begin position="1"/>
        <end position="437"/>
    </location>
</feature>
<feature type="domain" description="Obg" evidence="3">
    <location>
        <begin position="2"/>
        <end position="160"/>
    </location>
</feature>
<feature type="domain" description="OBG-type G" evidence="1">
    <location>
        <begin position="161"/>
        <end position="338"/>
    </location>
</feature>
<feature type="domain" description="OCT" evidence="2">
    <location>
        <begin position="359"/>
        <end position="437"/>
    </location>
</feature>
<feature type="binding site" evidence="1">
    <location>
        <begin position="167"/>
        <end position="174"/>
    </location>
    <ligand>
        <name>GTP</name>
        <dbReference type="ChEBI" id="CHEBI:37565"/>
    </ligand>
</feature>
<feature type="binding site" evidence="1">
    <location>
        <position position="174"/>
    </location>
    <ligand>
        <name>Mg(2+)</name>
        <dbReference type="ChEBI" id="CHEBI:18420"/>
    </ligand>
</feature>
<feature type="binding site" evidence="1">
    <location>
        <begin position="192"/>
        <end position="196"/>
    </location>
    <ligand>
        <name>GTP</name>
        <dbReference type="ChEBI" id="CHEBI:37565"/>
    </ligand>
</feature>
<feature type="binding site" evidence="1">
    <location>
        <position position="194"/>
    </location>
    <ligand>
        <name>Mg(2+)</name>
        <dbReference type="ChEBI" id="CHEBI:18420"/>
    </ligand>
</feature>
<feature type="binding site" evidence="1">
    <location>
        <begin position="214"/>
        <end position="217"/>
    </location>
    <ligand>
        <name>GTP</name>
        <dbReference type="ChEBI" id="CHEBI:37565"/>
    </ligand>
</feature>
<feature type="binding site" evidence="1">
    <location>
        <begin position="284"/>
        <end position="287"/>
    </location>
    <ligand>
        <name>GTP</name>
        <dbReference type="ChEBI" id="CHEBI:37565"/>
    </ligand>
</feature>
<feature type="binding site" evidence="1">
    <location>
        <begin position="319"/>
        <end position="321"/>
    </location>
    <ligand>
        <name>GTP</name>
        <dbReference type="ChEBI" id="CHEBI:37565"/>
    </ligand>
</feature>
<dbReference type="EC" id="3.6.5.-" evidence="1"/>
<dbReference type="EMBL" id="CP000407">
    <property type="protein sequence ID" value="ABP89717.1"/>
    <property type="molecule type" value="Genomic_DNA"/>
</dbReference>
<dbReference type="SMR" id="A4VUC8"/>
<dbReference type="STRING" id="391295.SSU05_0751"/>
<dbReference type="KEGG" id="ssu:SSU05_0751"/>
<dbReference type="eggNOG" id="COG0536">
    <property type="taxonomic scope" value="Bacteria"/>
</dbReference>
<dbReference type="HOGENOM" id="CLU_011747_2_1_9"/>
<dbReference type="GO" id="GO:0005737">
    <property type="term" value="C:cytoplasm"/>
    <property type="evidence" value="ECO:0007669"/>
    <property type="project" value="UniProtKB-SubCell"/>
</dbReference>
<dbReference type="GO" id="GO:0005525">
    <property type="term" value="F:GTP binding"/>
    <property type="evidence" value="ECO:0007669"/>
    <property type="project" value="UniProtKB-UniRule"/>
</dbReference>
<dbReference type="GO" id="GO:0003924">
    <property type="term" value="F:GTPase activity"/>
    <property type="evidence" value="ECO:0007669"/>
    <property type="project" value="UniProtKB-UniRule"/>
</dbReference>
<dbReference type="GO" id="GO:0000287">
    <property type="term" value="F:magnesium ion binding"/>
    <property type="evidence" value="ECO:0007669"/>
    <property type="project" value="InterPro"/>
</dbReference>
<dbReference type="GO" id="GO:0042254">
    <property type="term" value="P:ribosome biogenesis"/>
    <property type="evidence" value="ECO:0007669"/>
    <property type="project" value="UniProtKB-UniRule"/>
</dbReference>
<dbReference type="CDD" id="cd01898">
    <property type="entry name" value="Obg"/>
    <property type="match status" value="1"/>
</dbReference>
<dbReference type="FunFam" id="2.70.210.12:FF:000001">
    <property type="entry name" value="GTPase Obg"/>
    <property type="match status" value="1"/>
</dbReference>
<dbReference type="FunFam" id="3.40.50.300:FF:000515">
    <property type="entry name" value="GTPase Obg"/>
    <property type="match status" value="1"/>
</dbReference>
<dbReference type="Gene3D" id="3.30.300.350">
    <property type="entry name" value="GTP-binding protein OBG, C-terminal domain"/>
    <property type="match status" value="1"/>
</dbReference>
<dbReference type="Gene3D" id="2.70.210.12">
    <property type="entry name" value="GTP1/OBG domain"/>
    <property type="match status" value="1"/>
</dbReference>
<dbReference type="Gene3D" id="3.40.50.300">
    <property type="entry name" value="P-loop containing nucleotide triphosphate hydrolases"/>
    <property type="match status" value="1"/>
</dbReference>
<dbReference type="HAMAP" id="MF_01454">
    <property type="entry name" value="GTPase_Obg"/>
    <property type="match status" value="1"/>
</dbReference>
<dbReference type="InterPro" id="IPR031167">
    <property type="entry name" value="G_OBG"/>
</dbReference>
<dbReference type="InterPro" id="IPR006073">
    <property type="entry name" value="GTP-bd"/>
</dbReference>
<dbReference type="InterPro" id="IPR014100">
    <property type="entry name" value="GTP-bd_Obg/CgtA"/>
</dbReference>
<dbReference type="InterPro" id="IPR036346">
    <property type="entry name" value="GTP-bd_prot_GTP1/OBG_C_sf"/>
</dbReference>
<dbReference type="InterPro" id="IPR006074">
    <property type="entry name" value="GTP1-OBG_CS"/>
</dbReference>
<dbReference type="InterPro" id="IPR006169">
    <property type="entry name" value="GTP1_OBG_dom"/>
</dbReference>
<dbReference type="InterPro" id="IPR036726">
    <property type="entry name" value="GTP1_OBG_dom_sf"/>
</dbReference>
<dbReference type="InterPro" id="IPR045086">
    <property type="entry name" value="OBG_GTPase"/>
</dbReference>
<dbReference type="InterPro" id="IPR015349">
    <property type="entry name" value="OCT_dom"/>
</dbReference>
<dbReference type="InterPro" id="IPR027417">
    <property type="entry name" value="P-loop_NTPase"/>
</dbReference>
<dbReference type="InterPro" id="IPR005225">
    <property type="entry name" value="Small_GTP-bd"/>
</dbReference>
<dbReference type="NCBIfam" id="TIGR02729">
    <property type="entry name" value="Obg_CgtA"/>
    <property type="match status" value="1"/>
</dbReference>
<dbReference type="NCBIfam" id="TIGR03595">
    <property type="entry name" value="Obg_CgtA_exten"/>
    <property type="match status" value="1"/>
</dbReference>
<dbReference type="NCBIfam" id="NF008954">
    <property type="entry name" value="PRK12296.1"/>
    <property type="match status" value="1"/>
</dbReference>
<dbReference type="NCBIfam" id="NF008955">
    <property type="entry name" value="PRK12297.1"/>
    <property type="match status" value="1"/>
</dbReference>
<dbReference type="NCBIfam" id="NF008956">
    <property type="entry name" value="PRK12299.1"/>
    <property type="match status" value="1"/>
</dbReference>
<dbReference type="NCBIfam" id="TIGR00231">
    <property type="entry name" value="small_GTP"/>
    <property type="match status" value="1"/>
</dbReference>
<dbReference type="PANTHER" id="PTHR11702">
    <property type="entry name" value="DEVELOPMENTALLY REGULATED GTP-BINDING PROTEIN-RELATED"/>
    <property type="match status" value="1"/>
</dbReference>
<dbReference type="PANTHER" id="PTHR11702:SF31">
    <property type="entry name" value="MITOCHONDRIAL RIBOSOME-ASSOCIATED GTPASE 2"/>
    <property type="match status" value="1"/>
</dbReference>
<dbReference type="Pfam" id="PF09269">
    <property type="entry name" value="DUF1967"/>
    <property type="match status" value="1"/>
</dbReference>
<dbReference type="Pfam" id="PF01018">
    <property type="entry name" value="GTP1_OBG"/>
    <property type="match status" value="1"/>
</dbReference>
<dbReference type="Pfam" id="PF01926">
    <property type="entry name" value="MMR_HSR1"/>
    <property type="match status" value="1"/>
</dbReference>
<dbReference type="PRINTS" id="PR00326">
    <property type="entry name" value="GTP1OBG"/>
</dbReference>
<dbReference type="SUPFAM" id="SSF102741">
    <property type="entry name" value="Obg GTP-binding protein C-terminal domain"/>
    <property type="match status" value="1"/>
</dbReference>
<dbReference type="SUPFAM" id="SSF82051">
    <property type="entry name" value="Obg GTP-binding protein N-terminal domain"/>
    <property type="match status" value="1"/>
</dbReference>
<dbReference type="SUPFAM" id="SSF52540">
    <property type="entry name" value="P-loop containing nucleoside triphosphate hydrolases"/>
    <property type="match status" value="1"/>
</dbReference>
<dbReference type="PROSITE" id="PS51710">
    <property type="entry name" value="G_OBG"/>
    <property type="match status" value="1"/>
</dbReference>
<dbReference type="PROSITE" id="PS00905">
    <property type="entry name" value="GTP1_OBG"/>
    <property type="match status" value="1"/>
</dbReference>
<dbReference type="PROSITE" id="PS51883">
    <property type="entry name" value="OBG"/>
    <property type="match status" value="1"/>
</dbReference>
<dbReference type="PROSITE" id="PS51881">
    <property type="entry name" value="OCT"/>
    <property type="match status" value="1"/>
</dbReference>